<gene>
    <name evidence="1" type="primary">ispDF</name>
    <name type="ordered locus">CHAB381_0932</name>
</gene>
<keyword id="KW-0414">Isoprene biosynthesis</keyword>
<keyword id="KW-0456">Lyase</keyword>
<keyword id="KW-0479">Metal-binding</keyword>
<keyword id="KW-0511">Multifunctional enzyme</keyword>
<keyword id="KW-0548">Nucleotidyltransferase</keyword>
<keyword id="KW-1185">Reference proteome</keyword>
<keyword id="KW-0808">Transferase</keyword>
<name>ISPDF_CAMHC</name>
<evidence type="ECO:0000255" key="1">
    <source>
        <dbReference type="HAMAP-Rule" id="MF_01520"/>
    </source>
</evidence>
<comment type="function">
    <text evidence="1">Bifunctional enzyme that catalyzes the formation of 4-diphosphocytidyl-2-C-methyl-D-erythritol from CTP and 2-C-methyl-D-erythritol 4-phosphate (MEP) (IspD), and catalyzes the conversion of 4-diphosphocytidyl-2-C-methyl-D-erythritol 2-phosphate (CDP-ME2P) to 2-C-methyl-D-erythritol 2,4-cyclodiphosphate (ME-CPP) with a corresponding release of cytidine 5-monophosphate (CMP) (IspF).</text>
</comment>
<comment type="catalytic activity">
    <reaction evidence="1">
        <text>2-C-methyl-D-erythritol 4-phosphate + CTP + H(+) = 4-CDP-2-C-methyl-D-erythritol + diphosphate</text>
        <dbReference type="Rhea" id="RHEA:13429"/>
        <dbReference type="ChEBI" id="CHEBI:15378"/>
        <dbReference type="ChEBI" id="CHEBI:33019"/>
        <dbReference type="ChEBI" id="CHEBI:37563"/>
        <dbReference type="ChEBI" id="CHEBI:57823"/>
        <dbReference type="ChEBI" id="CHEBI:58262"/>
        <dbReference type="EC" id="2.7.7.60"/>
    </reaction>
</comment>
<comment type="catalytic activity">
    <reaction evidence="1">
        <text>4-CDP-2-C-methyl-D-erythritol 2-phosphate = 2-C-methyl-D-erythritol 2,4-cyclic diphosphate + CMP</text>
        <dbReference type="Rhea" id="RHEA:23864"/>
        <dbReference type="ChEBI" id="CHEBI:57919"/>
        <dbReference type="ChEBI" id="CHEBI:58483"/>
        <dbReference type="ChEBI" id="CHEBI:60377"/>
        <dbReference type="EC" id="4.6.1.12"/>
    </reaction>
</comment>
<comment type="cofactor">
    <cofactor evidence="1">
        <name>a divalent metal cation</name>
        <dbReference type="ChEBI" id="CHEBI:60240"/>
    </cofactor>
</comment>
<comment type="pathway">
    <text evidence="1">Isoprenoid biosynthesis; isopentenyl diphosphate biosynthesis via DXP pathway; isopentenyl diphosphate from 1-deoxy-D-xylulose 5-phosphate: step 2/6.</text>
</comment>
<comment type="pathway">
    <text evidence="1">Isoprenoid biosynthesis; isopentenyl diphosphate biosynthesis via DXP pathway; isopentenyl diphosphate from 1-deoxy-D-xylulose 5-phosphate: step 4/6.</text>
</comment>
<comment type="similarity">
    <text evidence="1">In the N-terminal section; belongs to the IspD/TarI cytidylyltransferase family. IspD subfamily.</text>
</comment>
<comment type="similarity">
    <text evidence="1">In the C-terminal section; belongs to the IspF family.</text>
</comment>
<proteinExistence type="inferred from homology"/>
<organism>
    <name type="scientific">Campylobacter hominis (strain ATCC BAA-381 / DSM 21671 / CCUG 45161 / LMG 19568 / NCTC 13146 / CH001A)</name>
    <dbReference type="NCBI Taxonomy" id="360107"/>
    <lineage>
        <taxon>Bacteria</taxon>
        <taxon>Pseudomonadati</taxon>
        <taxon>Campylobacterota</taxon>
        <taxon>Epsilonproteobacteria</taxon>
        <taxon>Campylobacterales</taxon>
        <taxon>Campylobacteraceae</taxon>
        <taxon>Campylobacter</taxon>
    </lineage>
</organism>
<sequence>MKDITLVLLAAGDSTRFKAPFKKQWIRIGEIPLWQYVAKDLSQKCDFSDIIIVANEKEISYMKKIERNFKYAKGGKLRQNSLANALKKVKSEFVFVSDTARAEISKDLIGRLINECEKFDCVSPFLGVVDTTYLGRNQIDRNDLKLIQTPQISRANLLKKALESNEIFTDDSAAVAFAGGKLGFVEGDEKARKITFTSDLAHFDFTPASGTIFTGNGFDVHAFAKGEFITLGGVKIPCEYSLVGHSDADAAIHALMDAILGACGLGDIGELFPDTDDSFKGIDSKILLQKVVNFVHLLGFKIINADITIIAQKPKISPYKEKMCEILSEILQTSRVNVKASTTEKLGFVGRVEGVAAIASANLGYFDWRKF</sequence>
<accession>A7I1V2</accession>
<dbReference type="EC" id="2.7.7.60" evidence="1"/>
<dbReference type="EC" id="4.6.1.12" evidence="1"/>
<dbReference type="EMBL" id="CP000776">
    <property type="protein sequence ID" value="ABS51641.1"/>
    <property type="molecule type" value="Genomic_DNA"/>
</dbReference>
<dbReference type="RefSeq" id="WP_012108785.1">
    <property type="nucleotide sequence ID" value="NC_009714.1"/>
</dbReference>
<dbReference type="SMR" id="A7I1V2"/>
<dbReference type="STRING" id="360107.CHAB381_0932"/>
<dbReference type="KEGG" id="cha:CHAB381_0932"/>
<dbReference type="eggNOG" id="COG0245">
    <property type="taxonomic scope" value="Bacteria"/>
</dbReference>
<dbReference type="eggNOG" id="COG1211">
    <property type="taxonomic scope" value="Bacteria"/>
</dbReference>
<dbReference type="HOGENOM" id="CLU_042800_2_6_7"/>
<dbReference type="OrthoDB" id="9804336at2"/>
<dbReference type="UniPathway" id="UPA00056">
    <property type="reaction ID" value="UER00093"/>
</dbReference>
<dbReference type="UniPathway" id="UPA00056">
    <property type="reaction ID" value="UER00095"/>
</dbReference>
<dbReference type="Proteomes" id="UP000002407">
    <property type="component" value="Chromosome"/>
</dbReference>
<dbReference type="GO" id="GO:0008685">
    <property type="term" value="F:2-C-methyl-D-erythritol 2,4-cyclodiphosphate synthase activity"/>
    <property type="evidence" value="ECO:0007669"/>
    <property type="project" value="UniProtKB-UniRule"/>
</dbReference>
<dbReference type="GO" id="GO:0050518">
    <property type="term" value="F:2-C-methyl-D-erythritol 4-phosphate cytidylyltransferase activity"/>
    <property type="evidence" value="ECO:0007669"/>
    <property type="project" value="UniProtKB-UniRule"/>
</dbReference>
<dbReference type="GO" id="GO:0046872">
    <property type="term" value="F:metal ion binding"/>
    <property type="evidence" value="ECO:0007669"/>
    <property type="project" value="UniProtKB-KW"/>
</dbReference>
<dbReference type="GO" id="GO:0019288">
    <property type="term" value="P:isopentenyl diphosphate biosynthetic process, methylerythritol 4-phosphate pathway"/>
    <property type="evidence" value="ECO:0007669"/>
    <property type="project" value="UniProtKB-UniRule"/>
</dbReference>
<dbReference type="GO" id="GO:0016114">
    <property type="term" value="P:terpenoid biosynthetic process"/>
    <property type="evidence" value="ECO:0007669"/>
    <property type="project" value="InterPro"/>
</dbReference>
<dbReference type="CDD" id="cd02516">
    <property type="entry name" value="CDP-ME_synthetase"/>
    <property type="match status" value="1"/>
</dbReference>
<dbReference type="CDD" id="cd00554">
    <property type="entry name" value="MECDP_synthase"/>
    <property type="match status" value="1"/>
</dbReference>
<dbReference type="Gene3D" id="3.30.1330.50">
    <property type="entry name" value="2-C-methyl-D-erythritol 2,4-cyclodiphosphate synthase"/>
    <property type="match status" value="1"/>
</dbReference>
<dbReference type="Gene3D" id="3.90.550.10">
    <property type="entry name" value="Spore Coat Polysaccharide Biosynthesis Protein SpsA, Chain A"/>
    <property type="match status" value="1"/>
</dbReference>
<dbReference type="HAMAP" id="MF_01520">
    <property type="entry name" value="IspDF"/>
    <property type="match status" value="1"/>
</dbReference>
<dbReference type="HAMAP" id="MF_00107">
    <property type="entry name" value="IspF"/>
    <property type="match status" value="1"/>
</dbReference>
<dbReference type="InterPro" id="IPR026596">
    <property type="entry name" value="IspD/F"/>
</dbReference>
<dbReference type="InterPro" id="IPR034683">
    <property type="entry name" value="IspD/TarI"/>
</dbReference>
<dbReference type="InterPro" id="IPR003526">
    <property type="entry name" value="MECDP_synthase"/>
</dbReference>
<dbReference type="InterPro" id="IPR020555">
    <property type="entry name" value="MECDP_synthase_CS"/>
</dbReference>
<dbReference type="InterPro" id="IPR036571">
    <property type="entry name" value="MECDP_synthase_sf"/>
</dbReference>
<dbReference type="InterPro" id="IPR029044">
    <property type="entry name" value="Nucleotide-diphossugar_trans"/>
</dbReference>
<dbReference type="NCBIfam" id="TIGR00151">
    <property type="entry name" value="ispF"/>
    <property type="match status" value="1"/>
</dbReference>
<dbReference type="NCBIfam" id="NF006899">
    <property type="entry name" value="PRK09382.1"/>
    <property type="match status" value="1"/>
</dbReference>
<dbReference type="PANTHER" id="PTHR43181">
    <property type="entry name" value="2-C-METHYL-D-ERYTHRITOL 2,4-CYCLODIPHOSPHATE SYNTHASE, CHLOROPLASTIC"/>
    <property type="match status" value="1"/>
</dbReference>
<dbReference type="PANTHER" id="PTHR43181:SF1">
    <property type="entry name" value="2-C-METHYL-D-ERYTHRITOL 2,4-CYCLODIPHOSPHATE SYNTHASE, CHLOROPLASTIC"/>
    <property type="match status" value="1"/>
</dbReference>
<dbReference type="Pfam" id="PF01128">
    <property type="entry name" value="IspD"/>
    <property type="match status" value="1"/>
</dbReference>
<dbReference type="Pfam" id="PF02542">
    <property type="entry name" value="YgbB"/>
    <property type="match status" value="1"/>
</dbReference>
<dbReference type="SUPFAM" id="SSF69765">
    <property type="entry name" value="IpsF-like"/>
    <property type="match status" value="1"/>
</dbReference>
<dbReference type="SUPFAM" id="SSF53448">
    <property type="entry name" value="Nucleotide-diphospho-sugar transferases"/>
    <property type="match status" value="1"/>
</dbReference>
<dbReference type="PROSITE" id="PS01350">
    <property type="entry name" value="ISPF"/>
    <property type="match status" value="1"/>
</dbReference>
<reference key="1">
    <citation type="submission" date="2007-07" db="EMBL/GenBank/DDBJ databases">
        <title>Complete genome sequence of Campylobacter hominis ATCC BAA-381, a commensal isolated from the human gastrointestinal tract.</title>
        <authorList>
            <person name="Fouts D.E."/>
            <person name="Mongodin E.F."/>
            <person name="Puiu D."/>
            <person name="Sebastian Y."/>
            <person name="Miller W.G."/>
            <person name="Mandrell R.E."/>
            <person name="Nelson K.E."/>
        </authorList>
    </citation>
    <scope>NUCLEOTIDE SEQUENCE [LARGE SCALE GENOMIC DNA]</scope>
    <source>
        <strain>ATCC BAA-381 / DSM 21671 / CCUG 45161 / LMG 19568 / NCTC 13146 / CH001A</strain>
    </source>
</reference>
<feature type="chain" id="PRO_1000068625" description="Bifunctional enzyme IspD/IspF">
    <location>
        <begin position="1"/>
        <end position="371"/>
    </location>
</feature>
<feature type="region of interest" description="2-C-methyl-D-erythritol 4-phosphate cytidylyltransferase" evidence="1">
    <location>
        <begin position="1"/>
        <end position="212"/>
    </location>
</feature>
<feature type="region of interest" description="2-C-methyl-D-erythritol 2,4-cyclodiphosphate synthase" evidence="1">
    <location>
        <begin position="213"/>
        <end position="371"/>
    </location>
</feature>
<feature type="binding site" evidence="1">
    <location>
        <begin position="219"/>
        <end position="221"/>
    </location>
    <ligand>
        <name>4-CDP-2-C-methyl-D-erythritol 2-phosphate</name>
        <dbReference type="ChEBI" id="CHEBI:57919"/>
    </ligand>
</feature>
<feature type="binding site" evidence="1">
    <location>
        <position position="219"/>
    </location>
    <ligand>
        <name>a divalent metal cation</name>
        <dbReference type="ChEBI" id="CHEBI:60240"/>
    </ligand>
</feature>
<feature type="binding site" evidence="1">
    <location>
        <position position="221"/>
    </location>
    <ligand>
        <name>a divalent metal cation</name>
        <dbReference type="ChEBI" id="CHEBI:60240"/>
    </ligand>
</feature>
<feature type="binding site" evidence="1">
    <location>
        <begin position="245"/>
        <end position="246"/>
    </location>
    <ligand>
        <name>4-CDP-2-C-methyl-D-erythritol 2-phosphate</name>
        <dbReference type="ChEBI" id="CHEBI:57919"/>
    </ligand>
</feature>
<feature type="binding site" evidence="1">
    <location>
        <position position="253"/>
    </location>
    <ligand>
        <name>a divalent metal cation</name>
        <dbReference type="ChEBI" id="CHEBI:60240"/>
    </ligand>
</feature>
<feature type="binding site" evidence="1">
    <location>
        <begin position="267"/>
        <end position="269"/>
    </location>
    <ligand>
        <name>4-CDP-2-C-methyl-D-erythritol 2-phosphate</name>
        <dbReference type="ChEBI" id="CHEBI:57919"/>
    </ligand>
</feature>
<feature type="binding site" evidence="1">
    <location>
        <begin position="272"/>
        <end position="276"/>
    </location>
    <ligand>
        <name>4-CDP-2-C-methyl-D-erythritol 2-phosphate</name>
        <dbReference type="ChEBI" id="CHEBI:57919"/>
    </ligand>
</feature>
<feature type="binding site" evidence="1">
    <location>
        <begin position="341"/>
        <end position="344"/>
    </location>
    <ligand>
        <name>4-CDP-2-C-methyl-D-erythritol 2-phosphate</name>
        <dbReference type="ChEBI" id="CHEBI:57919"/>
    </ligand>
</feature>
<feature type="binding site" evidence="1">
    <location>
        <position position="348"/>
    </location>
    <ligand>
        <name>4-CDP-2-C-methyl-D-erythritol 2-phosphate</name>
        <dbReference type="ChEBI" id="CHEBI:57919"/>
    </ligand>
</feature>
<feature type="binding site" evidence="1">
    <location>
        <position position="351"/>
    </location>
    <ligand>
        <name>4-CDP-2-C-methyl-D-erythritol 2-phosphate</name>
        <dbReference type="ChEBI" id="CHEBI:57919"/>
    </ligand>
</feature>
<feature type="site" description="Transition state stabilizer" evidence="1">
    <location>
        <position position="16"/>
    </location>
</feature>
<feature type="site" description="Transition state stabilizer" evidence="1">
    <location>
        <position position="23"/>
    </location>
</feature>
<feature type="site" description="Positions MEP for the nucleophilic attack" evidence="1">
    <location>
        <position position="141"/>
    </location>
</feature>
<feature type="site" description="Positions MEP for the nucleophilic attack" evidence="1">
    <location>
        <position position="193"/>
    </location>
</feature>
<feature type="site" description="Transition state stabilizer" evidence="1">
    <location>
        <position position="245"/>
    </location>
</feature>
<feature type="site" description="Transition state stabilizer" evidence="1">
    <location>
        <position position="342"/>
    </location>
</feature>
<protein>
    <recommendedName>
        <fullName evidence="1">Bifunctional enzyme IspD/IspF</fullName>
    </recommendedName>
    <domain>
        <recommendedName>
            <fullName evidence="1">2-C-methyl-D-erythritol 4-phosphate cytidylyltransferase</fullName>
            <ecNumber evidence="1">2.7.7.60</ecNumber>
        </recommendedName>
        <alternativeName>
            <fullName evidence="1">4-diphosphocytidyl-2C-methyl-D-erythritol synthase</fullName>
        </alternativeName>
        <alternativeName>
            <fullName evidence="1">MEP cytidylyltransferase</fullName>
            <shortName evidence="1">MCT</shortName>
        </alternativeName>
    </domain>
    <domain>
        <recommendedName>
            <fullName evidence="1">2-C-methyl-D-erythritol 2,4-cyclodiphosphate synthase</fullName>
            <shortName evidence="1">MECDP-synthase</shortName>
            <shortName evidence="1">MECPP-synthase</shortName>
            <shortName evidence="1">MECPS</shortName>
            <ecNumber evidence="1">4.6.1.12</ecNumber>
        </recommendedName>
    </domain>
</protein>